<proteinExistence type="inferred from homology"/>
<feature type="chain" id="PRO_0000251495" description="Large ribosomal subunit protein uL15">
    <location>
        <begin position="1"/>
        <end position="144"/>
    </location>
</feature>
<feature type="region of interest" description="Disordered" evidence="2">
    <location>
        <begin position="1"/>
        <end position="56"/>
    </location>
</feature>
<feature type="compositionally biased region" description="Gly residues" evidence="2">
    <location>
        <begin position="21"/>
        <end position="31"/>
    </location>
</feature>
<comment type="function">
    <text evidence="1">Binds to the 23S rRNA.</text>
</comment>
<comment type="subunit">
    <text evidence="1">Part of the 50S ribosomal subunit.</text>
</comment>
<comment type="similarity">
    <text evidence="1">Belongs to the universal ribosomal protein uL15 family.</text>
</comment>
<keyword id="KW-0687">Ribonucleoprotein</keyword>
<keyword id="KW-0689">Ribosomal protein</keyword>
<keyword id="KW-0694">RNA-binding</keyword>
<keyword id="KW-0699">rRNA-binding</keyword>
<sequence>MELNNLKPAAGAKHAKRRVGRGIGSGLGKTAGRGHKGQKSRSGGFHKVGFEGGQMPLQRRLPKRGFTSLTKEFVGEVRLSDLEKLPVDEIDLLALKQAGLVGELTKSAKIIATGELKRKIVVKGLGATKGARAAIEAAGGSFAE</sequence>
<accession>Q39KE8</accession>
<reference key="1">
    <citation type="submission" date="2005-10" db="EMBL/GenBank/DDBJ databases">
        <title>Complete sequence of chromosome 1 of Burkholderia sp. 383.</title>
        <authorList>
            <consortium name="US DOE Joint Genome Institute"/>
            <person name="Copeland A."/>
            <person name="Lucas S."/>
            <person name="Lapidus A."/>
            <person name="Barry K."/>
            <person name="Detter J.C."/>
            <person name="Glavina T."/>
            <person name="Hammon N."/>
            <person name="Israni S."/>
            <person name="Pitluck S."/>
            <person name="Chain P."/>
            <person name="Malfatti S."/>
            <person name="Shin M."/>
            <person name="Vergez L."/>
            <person name="Schmutz J."/>
            <person name="Larimer F."/>
            <person name="Land M."/>
            <person name="Kyrpides N."/>
            <person name="Lykidis A."/>
            <person name="Richardson P."/>
        </authorList>
    </citation>
    <scope>NUCLEOTIDE SEQUENCE [LARGE SCALE GENOMIC DNA]</scope>
    <source>
        <strain>ATCC 17760 / DSM 23089 / LMG 22485 / NCIMB 9086 / R18194 / 383</strain>
    </source>
</reference>
<gene>
    <name evidence="1" type="primary">rplO</name>
    <name type="ordered locus">Bcep18194_A3466</name>
</gene>
<evidence type="ECO:0000255" key="1">
    <source>
        <dbReference type="HAMAP-Rule" id="MF_01341"/>
    </source>
</evidence>
<evidence type="ECO:0000256" key="2">
    <source>
        <dbReference type="SAM" id="MobiDB-lite"/>
    </source>
</evidence>
<evidence type="ECO:0000305" key="3"/>
<organism>
    <name type="scientific">Burkholderia lata (strain ATCC 17760 / DSM 23089 / LMG 22485 / NCIMB 9086 / R18194 / 383)</name>
    <dbReference type="NCBI Taxonomy" id="482957"/>
    <lineage>
        <taxon>Bacteria</taxon>
        <taxon>Pseudomonadati</taxon>
        <taxon>Pseudomonadota</taxon>
        <taxon>Betaproteobacteria</taxon>
        <taxon>Burkholderiales</taxon>
        <taxon>Burkholderiaceae</taxon>
        <taxon>Burkholderia</taxon>
        <taxon>Burkholderia cepacia complex</taxon>
    </lineage>
</organism>
<name>RL15_BURL3</name>
<protein>
    <recommendedName>
        <fullName evidence="1">Large ribosomal subunit protein uL15</fullName>
    </recommendedName>
    <alternativeName>
        <fullName evidence="3">50S ribosomal protein L15</fullName>
    </alternativeName>
</protein>
<dbReference type="EMBL" id="CP000151">
    <property type="protein sequence ID" value="ABB07068.1"/>
    <property type="molecule type" value="Genomic_DNA"/>
</dbReference>
<dbReference type="RefSeq" id="WP_006477180.1">
    <property type="nucleotide sequence ID" value="NZ_WNDV01000034.1"/>
</dbReference>
<dbReference type="SMR" id="Q39KE8"/>
<dbReference type="GeneID" id="93193432"/>
<dbReference type="KEGG" id="bur:Bcep18194_A3466"/>
<dbReference type="PATRIC" id="fig|482957.22.peg.307"/>
<dbReference type="HOGENOM" id="CLU_055188_4_2_4"/>
<dbReference type="Proteomes" id="UP000002705">
    <property type="component" value="Chromosome 1"/>
</dbReference>
<dbReference type="GO" id="GO:0022625">
    <property type="term" value="C:cytosolic large ribosomal subunit"/>
    <property type="evidence" value="ECO:0007669"/>
    <property type="project" value="TreeGrafter"/>
</dbReference>
<dbReference type="GO" id="GO:0019843">
    <property type="term" value="F:rRNA binding"/>
    <property type="evidence" value="ECO:0007669"/>
    <property type="project" value="UniProtKB-UniRule"/>
</dbReference>
<dbReference type="GO" id="GO:0003735">
    <property type="term" value="F:structural constituent of ribosome"/>
    <property type="evidence" value="ECO:0007669"/>
    <property type="project" value="InterPro"/>
</dbReference>
<dbReference type="GO" id="GO:0006412">
    <property type="term" value="P:translation"/>
    <property type="evidence" value="ECO:0007669"/>
    <property type="project" value="UniProtKB-UniRule"/>
</dbReference>
<dbReference type="Gene3D" id="3.100.10.10">
    <property type="match status" value="1"/>
</dbReference>
<dbReference type="HAMAP" id="MF_01341">
    <property type="entry name" value="Ribosomal_uL15"/>
    <property type="match status" value="1"/>
</dbReference>
<dbReference type="InterPro" id="IPR030878">
    <property type="entry name" value="Ribosomal_uL15"/>
</dbReference>
<dbReference type="InterPro" id="IPR021131">
    <property type="entry name" value="Ribosomal_uL15/eL18"/>
</dbReference>
<dbReference type="InterPro" id="IPR036227">
    <property type="entry name" value="Ribosomal_uL15/eL18_sf"/>
</dbReference>
<dbReference type="InterPro" id="IPR005749">
    <property type="entry name" value="Ribosomal_uL15_bac-type"/>
</dbReference>
<dbReference type="InterPro" id="IPR001196">
    <property type="entry name" value="Ribosomal_uL15_CS"/>
</dbReference>
<dbReference type="NCBIfam" id="TIGR01071">
    <property type="entry name" value="rplO_bact"/>
    <property type="match status" value="1"/>
</dbReference>
<dbReference type="PANTHER" id="PTHR12934">
    <property type="entry name" value="50S RIBOSOMAL PROTEIN L15"/>
    <property type="match status" value="1"/>
</dbReference>
<dbReference type="PANTHER" id="PTHR12934:SF11">
    <property type="entry name" value="LARGE RIBOSOMAL SUBUNIT PROTEIN UL15M"/>
    <property type="match status" value="1"/>
</dbReference>
<dbReference type="Pfam" id="PF00828">
    <property type="entry name" value="Ribosomal_L27A"/>
    <property type="match status" value="1"/>
</dbReference>
<dbReference type="SUPFAM" id="SSF52080">
    <property type="entry name" value="Ribosomal proteins L15p and L18e"/>
    <property type="match status" value="1"/>
</dbReference>
<dbReference type="PROSITE" id="PS00475">
    <property type="entry name" value="RIBOSOMAL_L15"/>
    <property type="match status" value="1"/>
</dbReference>